<keyword id="KW-1185">Reference proteome</keyword>
<feature type="chain" id="PRO_0000106967" description="Uncharacterized protein MJ0640">
    <location>
        <begin position="1"/>
        <end position="324"/>
    </location>
</feature>
<reference key="1">
    <citation type="journal article" date="1996" name="Science">
        <title>Complete genome sequence of the methanogenic archaeon, Methanococcus jannaschii.</title>
        <authorList>
            <person name="Bult C.J."/>
            <person name="White O."/>
            <person name="Olsen G.J."/>
            <person name="Zhou L."/>
            <person name="Fleischmann R.D."/>
            <person name="Sutton G.G."/>
            <person name="Blake J.A."/>
            <person name="FitzGerald L.M."/>
            <person name="Clayton R.A."/>
            <person name="Gocayne J.D."/>
            <person name="Kerlavage A.R."/>
            <person name="Dougherty B.A."/>
            <person name="Tomb J.-F."/>
            <person name="Adams M.D."/>
            <person name="Reich C.I."/>
            <person name="Overbeek R."/>
            <person name="Kirkness E.F."/>
            <person name="Weinstock K.G."/>
            <person name="Merrick J.M."/>
            <person name="Glodek A."/>
            <person name="Scott J.L."/>
            <person name="Geoghagen N.S.M."/>
            <person name="Weidman J.F."/>
            <person name="Fuhrmann J.L."/>
            <person name="Nguyen D."/>
            <person name="Utterback T.R."/>
            <person name="Kelley J.M."/>
            <person name="Peterson J.D."/>
            <person name="Sadow P.W."/>
            <person name="Hanna M.C."/>
            <person name="Cotton M.D."/>
            <person name="Roberts K.M."/>
            <person name="Hurst M.A."/>
            <person name="Kaine B.P."/>
            <person name="Borodovsky M."/>
            <person name="Klenk H.-P."/>
            <person name="Fraser C.M."/>
            <person name="Smith H.O."/>
            <person name="Woese C.R."/>
            <person name="Venter J.C."/>
        </authorList>
    </citation>
    <scope>NUCLEOTIDE SEQUENCE [LARGE SCALE GENOMIC DNA]</scope>
    <source>
        <strain>ATCC 43067 / DSM 2661 / JAL-1 / JCM 10045 / NBRC 100440</strain>
    </source>
</reference>
<proteinExistence type="predicted"/>
<accession>Q58057</accession>
<gene>
    <name type="ordered locus">MJ0640</name>
</gene>
<name>Y640_METJA</name>
<sequence>MNLKKVVNEIRNFEGILRKIAIKDVVETFDFNDEDYEFDIIVDFGDDAAVIGIDGDNAILLAADGIWGKLLEADPWWAGYCSVLVNCKDIAAMGGKCVGMTNIISIKDKDICREVLKGVKDGVKKFGVPMVGGHTHPDAMCNVLDVSITGIAKKDCILRSDNAKIGDKIIFAYDLVGQIYKSFPLNWDTTTMKSKKLVRAQMDALVQIAENKLANSCKDISNPGAIGTLGMLLEVSRKGGVVDITKIPKPEEIDLIHWLKVYPGSGYVLTAKEENFKEIKDIFEDVEMTAEICGEVIAEKKLYITDGENKEVVFDFEKEFICGC</sequence>
<protein>
    <recommendedName>
        <fullName>Uncharacterized protein MJ0640</fullName>
    </recommendedName>
</protein>
<organism>
    <name type="scientific">Methanocaldococcus jannaschii (strain ATCC 43067 / DSM 2661 / JAL-1 / JCM 10045 / NBRC 100440)</name>
    <name type="common">Methanococcus jannaschii</name>
    <dbReference type="NCBI Taxonomy" id="243232"/>
    <lineage>
        <taxon>Archaea</taxon>
        <taxon>Methanobacteriati</taxon>
        <taxon>Methanobacteriota</taxon>
        <taxon>Methanomada group</taxon>
        <taxon>Methanococci</taxon>
        <taxon>Methanococcales</taxon>
        <taxon>Methanocaldococcaceae</taxon>
        <taxon>Methanocaldococcus</taxon>
    </lineage>
</organism>
<dbReference type="EMBL" id="L77117">
    <property type="protein sequence ID" value="AAB98632.1"/>
    <property type="molecule type" value="Genomic_DNA"/>
</dbReference>
<dbReference type="PIR" id="H64379">
    <property type="entry name" value="H64379"/>
</dbReference>
<dbReference type="RefSeq" id="WP_010870145.1">
    <property type="nucleotide sequence ID" value="NC_000909.1"/>
</dbReference>
<dbReference type="SMR" id="Q58057"/>
<dbReference type="FunCoup" id="Q58057">
    <property type="interactions" value="1"/>
</dbReference>
<dbReference type="STRING" id="243232.MJ_0640"/>
<dbReference type="PaxDb" id="243232-MJ_0640"/>
<dbReference type="EnsemblBacteria" id="AAB98632">
    <property type="protein sequence ID" value="AAB98632"/>
    <property type="gene ID" value="MJ_0640"/>
</dbReference>
<dbReference type="GeneID" id="1451506"/>
<dbReference type="KEGG" id="mja:MJ_0640"/>
<dbReference type="eggNOG" id="arCOG00640">
    <property type="taxonomic scope" value="Archaea"/>
</dbReference>
<dbReference type="HOGENOM" id="CLU_073250_0_0_2"/>
<dbReference type="InParanoid" id="Q58057"/>
<dbReference type="OrthoDB" id="31494at2157"/>
<dbReference type="PhylomeDB" id="Q58057"/>
<dbReference type="Proteomes" id="UP000000805">
    <property type="component" value="Chromosome"/>
</dbReference>
<dbReference type="GO" id="GO:0009030">
    <property type="term" value="F:thiamine-phosphate kinase activity"/>
    <property type="evidence" value="ECO:0007669"/>
    <property type="project" value="InterPro"/>
</dbReference>
<dbReference type="GO" id="GO:0009228">
    <property type="term" value="P:thiamine biosynthetic process"/>
    <property type="evidence" value="ECO:0007669"/>
    <property type="project" value="InterPro"/>
</dbReference>
<dbReference type="CDD" id="cd02192">
    <property type="entry name" value="PurM-like3"/>
    <property type="match status" value="1"/>
</dbReference>
<dbReference type="FunFam" id="3.90.650.10:FF:000036">
    <property type="entry name" value="AIR synthase related protein"/>
    <property type="match status" value="1"/>
</dbReference>
<dbReference type="FunFam" id="3.30.1330.10:FF:000027">
    <property type="entry name" value="Thiamine monophosphate kinase"/>
    <property type="match status" value="1"/>
</dbReference>
<dbReference type="Gene3D" id="3.90.650.10">
    <property type="entry name" value="PurM-like C-terminal domain"/>
    <property type="match status" value="1"/>
</dbReference>
<dbReference type="Gene3D" id="3.30.1330.10">
    <property type="entry name" value="PurM-like, N-terminal domain"/>
    <property type="match status" value="1"/>
</dbReference>
<dbReference type="InterPro" id="IPR017668">
    <property type="entry name" value="Methan_mark_2"/>
</dbReference>
<dbReference type="InterPro" id="IPR010918">
    <property type="entry name" value="PurM-like_C_dom"/>
</dbReference>
<dbReference type="InterPro" id="IPR036676">
    <property type="entry name" value="PurM-like_C_sf"/>
</dbReference>
<dbReference type="InterPro" id="IPR016188">
    <property type="entry name" value="PurM-like_N"/>
</dbReference>
<dbReference type="InterPro" id="IPR036921">
    <property type="entry name" value="PurM-like_N_sf"/>
</dbReference>
<dbReference type="InterPro" id="IPR006283">
    <property type="entry name" value="ThiL-like"/>
</dbReference>
<dbReference type="InterPro" id="IPR011413">
    <property type="entry name" value="UCP036540_AIR"/>
</dbReference>
<dbReference type="NCBIfam" id="TIGR03267">
    <property type="entry name" value="methan_mark_2"/>
    <property type="match status" value="1"/>
</dbReference>
<dbReference type="PANTHER" id="PTHR30270">
    <property type="entry name" value="THIAMINE-MONOPHOSPHATE KINASE"/>
    <property type="match status" value="1"/>
</dbReference>
<dbReference type="PANTHER" id="PTHR30270:SF0">
    <property type="entry name" value="THIAMINE-MONOPHOSPHATE KINASE"/>
    <property type="match status" value="1"/>
</dbReference>
<dbReference type="Pfam" id="PF00586">
    <property type="entry name" value="AIRS"/>
    <property type="match status" value="1"/>
</dbReference>
<dbReference type="Pfam" id="PF02769">
    <property type="entry name" value="AIRS_C"/>
    <property type="match status" value="1"/>
</dbReference>
<dbReference type="PIRSF" id="PIRSF036540">
    <property type="entry name" value="UCP036540_AIR"/>
    <property type="match status" value="1"/>
</dbReference>
<dbReference type="SUPFAM" id="SSF56042">
    <property type="entry name" value="PurM C-terminal domain-like"/>
    <property type="match status" value="1"/>
</dbReference>
<dbReference type="SUPFAM" id="SSF55326">
    <property type="entry name" value="PurM N-terminal domain-like"/>
    <property type="match status" value="1"/>
</dbReference>